<protein>
    <recommendedName>
        <fullName evidence="1">GMP synthase [glutamine-hydrolyzing]</fullName>
        <ecNumber evidence="1">6.3.5.2</ecNumber>
    </recommendedName>
    <alternativeName>
        <fullName evidence="1">GMP synthetase</fullName>
    </alternativeName>
    <alternativeName>
        <fullName evidence="1">Glutamine amidotransferase</fullName>
    </alternativeName>
</protein>
<organism>
    <name type="scientific">Cereibacter sphaeroides (strain KD131 / KCTC 12085)</name>
    <name type="common">Rhodobacter sphaeroides</name>
    <dbReference type="NCBI Taxonomy" id="557760"/>
    <lineage>
        <taxon>Bacteria</taxon>
        <taxon>Pseudomonadati</taxon>
        <taxon>Pseudomonadota</taxon>
        <taxon>Alphaproteobacteria</taxon>
        <taxon>Rhodobacterales</taxon>
        <taxon>Paracoccaceae</taxon>
        <taxon>Cereibacter</taxon>
    </lineage>
</organism>
<accession>B9KT27</accession>
<dbReference type="EC" id="6.3.5.2" evidence="1"/>
<dbReference type="EMBL" id="CP001150">
    <property type="protein sequence ID" value="ACM01173.1"/>
    <property type="molecule type" value="Genomic_DNA"/>
</dbReference>
<dbReference type="RefSeq" id="WP_009565333.1">
    <property type="nucleotide sequence ID" value="NC_011963.1"/>
</dbReference>
<dbReference type="SMR" id="B9KT27"/>
<dbReference type="MEROPS" id="C26.957"/>
<dbReference type="GeneID" id="67446732"/>
<dbReference type="KEGG" id="rsk:RSKD131_1313"/>
<dbReference type="HOGENOM" id="CLU_014340_0_5_5"/>
<dbReference type="UniPathway" id="UPA00189">
    <property type="reaction ID" value="UER00296"/>
</dbReference>
<dbReference type="GO" id="GO:0005829">
    <property type="term" value="C:cytosol"/>
    <property type="evidence" value="ECO:0007669"/>
    <property type="project" value="TreeGrafter"/>
</dbReference>
<dbReference type="GO" id="GO:0005524">
    <property type="term" value="F:ATP binding"/>
    <property type="evidence" value="ECO:0007669"/>
    <property type="project" value="UniProtKB-UniRule"/>
</dbReference>
<dbReference type="GO" id="GO:0003921">
    <property type="term" value="F:GMP synthase activity"/>
    <property type="evidence" value="ECO:0007669"/>
    <property type="project" value="InterPro"/>
</dbReference>
<dbReference type="CDD" id="cd01742">
    <property type="entry name" value="GATase1_GMP_Synthase"/>
    <property type="match status" value="1"/>
</dbReference>
<dbReference type="CDD" id="cd01997">
    <property type="entry name" value="GMP_synthase_C"/>
    <property type="match status" value="1"/>
</dbReference>
<dbReference type="FunFam" id="3.30.300.10:FF:000002">
    <property type="entry name" value="GMP synthase [glutamine-hydrolyzing]"/>
    <property type="match status" value="1"/>
</dbReference>
<dbReference type="FunFam" id="3.40.50.620:FF:000001">
    <property type="entry name" value="GMP synthase [glutamine-hydrolyzing]"/>
    <property type="match status" value="1"/>
</dbReference>
<dbReference type="FunFam" id="3.40.50.880:FF:000001">
    <property type="entry name" value="GMP synthase [glutamine-hydrolyzing]"/>
    <property type="match status" value="1"/>
</dbReference>
<dbReference type="Gene3D" id="3.30.300.10">
    <property type="match status" value="1"/>
</dbReference>
<dbReference type="Gene3D" id="3.40.50.880">
    <property type="match status" value="1"/>
</dbReference>
<dbReference type="Gene3D" id="3.40.50.620">
    <property type="entry name" value="HUPs"/>
    <property type="match status" value="1"/>
</dbReference>
<dbReference type="HAMAP" id="MF_00344">
    <property type="entry name" value="GMP_synthase"/>
    <property type="match status" value="1"/>
</dbReference>
<dbReference type="InterPro" id="IPR029062">
    <property type="entry name" value="Class_I_gatase-like"/>
</dbReference>
<dbReference type="InterPro" id="IPR017926">
    <property type="entry name" value="GATASE"/>
</dbReference>
<dbReference type="InterPro" id="IPR001674">
    <property type="entry name" value="GMP_synth_C"/>
</dbReference>
<dbReference type="InterPro" id="IPR004739">
    <property type="entry name" value="GMP_synth_GATase"/>
</dbReference>
<dbReference type="InterPro" id="IPR022955">
    <property type="entry name" value="GMP_synthase"/>
</dbReference>
<dbReference type="InterPro" id="IPR025777">
    <property type="entry name" value="GMPS_ATP_PPase_dom"/>
</dbReference>
<dbReference type="InterPro" id="IPR022310">
    <property type="entry name" value="NAD/GMP_synthase"/>
</dbReference>
<dbReference type="InterPro" id="IPR014729">
    <property type="entry name" value="Rossmann-like_a/b/a_fold"/>
</dbReference>
<dbReference type="NCBIfam" id="TIGR00884">
    <property type="entry name" value="guaA_Cterm"/>
    <property type="match status" value="1"/>
</dbReference>
<dbReference type="NCBIfam" id="TIGR00888">
    <property type="entry name" value="guaA_Nterm"/>
    <property type="match status" value="1"/>
</dbReference>
<dbReference type="NCBIfam" id="NF000848">
    <property type="entry name" value="PRK00074.1"/>
    <property type="match status" value="1"/>
</dbReference>
<dbReference type="PANTHER" id="PTHR11922:SF2">
    <property type="entry name" value="GMP SYNTHASE [GLUTAMINE-HYDROLYZING]"/>
    <property type="match status" value="1"/>
</dbReference>
<dbReference type="PANTHER" id="PTHR11922">
    <property type="entry name" value="GMP SYNTHASE-RELATED"/>
    <property type="match status" value="1"/>
</dbReference>
<dbReference type="Pfam" id="PF00117">
    <property type="entry name" value="GATase"/>
    <property type="match status" value="1"/>
</dbReference>
<dbReference type="Pfam" id="PF00958">
    <property type="entry name" value="GMP_synt_C"/>
    <property type="match status" value="1"/>
</dbReference>
<dbReference type="Pfam" id="PF02540">
    <property type="entry name" value="NAD_synthase"/>
    <property type="match status" value="1"/>
</dbReference>
<dbReference type="PRINTS" id="PR00097">
    <property type="entry name" value="ANTSNTHASEII"/>
</dbReference>
<dbReference type="PRINTS" id="PR00096">
    <property type="entry name" value="GATASE"/>
</dbReference>
<dbReference type="SUPFAM" id="SSF52402">
    <property type="entry name" value="Adenine nucleotide alpha hydrolases-like"/>
    <property type="match status" value="1"/>
</dbReference>
<dbReference type="SUPFAM" id="SSF52317">
    <property type="entry name" value="Class I glutamine amidotransferase-like"/>
    <property type="match status" value="1"/>
</dbReference>
<dbReference type="SUPFAM" id="SSF54810">
    <property type="entry name" value="GMP synthetase C-terminal dimerisation domain"/>
    <property type="match status" value="1"/>
</dbReference>
<dbReference type="PROSITE" id="PS51273">
    <property type="entry name" value="GATASE_TYPE_1"/>
    <property type="match status" value="1"/>
</dbReference>
<dbReference type="PROSITE" id="PS51553">
    <property type="entry name" value="GMPS_ATP_PPASE"/>
    <property type="match status" value="1"/>
</dbReference>
<reference key="1">
    <citation type="journal article" date="2009" name="J. Bacteriol.">
        <title>Complete genome sequence of Rhodobacter sphaeroides KD131.</title>
        <authorList>
            <person name="Lim S.-K."/>
            <person name="Kim S.J."/>
            <person name="Cha S.H."/>
            <person name="Oh Y.-K."/>
            <person name="Rhee H.-J."/>
            <person name="Kim M.-S."/>
            <person name="Lee J.K."/>
        </authorList>
    </citation>
    <scope>NUCLEOTIDE SEQUENCE [LARGE SCALE GENOMIC DNA]</scope>
    <source>
        <strain>KD131 / KCTC 12085</strain>
    </source>
</reference>
<gene>
    <name evidence="1" type="primary">guaA</name>
    <name type="ordered locus">RSKD131_1313</name>
</gene>
<feature type="chain" id="PRO_1000133377" description="GMP synthase [glutamine-hydrolyzing]">
    <location>
        <begin position="1"/>
        <end position="518"/>
    </location>
</feature>
<feature type="domain" description="Glutamine amidotransferase type-1" evidence="1">
    <location>
        <begin position="6"/>
        <end position="200"/>
    </location>
</feature>
<feature type="domain" description="GMPS ATP-PPase" evidence="1">
    <location>
        <begin position="201"/>
        <end position="393"/>
    </location>
</feature>
<feature type="active site" description="Nucleophile" evidence="1">
    <location>
        <position position="84"/>
    </location>
</feature>
<feature type="active site" evidence="1">
    <location>
        <position position="175"/>
    </location>
</feature>
<feature type="active site" evidence="1">
    <location>
        <position position="177"/>
    </location>
</feature>
<feature type="binding site" evidence="1">
    <location>
        <begin position="228"/>
        <end position="234"/>
    </location>
    <ligand>
        <name>ATP</name>
        <dbReference type="ChEBI" id="CHEBI:30616"/>
    </ligand>
</feature>
<name>GUAA_CERSK</name>
<comment type="function">
    <text evidence="1">Catalyzes the synthesis of GMP from XMP.</text>
</comment>
<comment type="catalytic activity">
    <reaction evidence="1">
        <text>XMP + L-glutamine + ATP + H2O = GMP + L-glutamate + AMP + diphosphate + 2 H(+)</text>
        <dbReference type="Rhea" id="RHEA:11680"/>
        <dbReference type="ChEBI" id="CHEBI:15377"/>
        <dbReference type="ChEBI" id="CHEBI:15378"/>
        <dbReference type="ChEBI" id="CHEBI:29985"/>
        <dbReference type="ChEBI" id="CHEBI:30616"/>
        <dbReference type="ChEBI" id="CHEBI:33019"/>
        <dbReference type="ChEBI" id="CHEBI:57464"/>
        <dbReference type="ChEBI" id="CHEBI:58115"/>
        <dbReference type="ChEBI" id="CHEBI:58359"/>
        <dbReference type="ChEBI" id="CHEBI:456215"/>
        <dbReference type="EC" id="6.3.5.2"/>
    </reaction>
</comment>
<comment type="pathway">
    <text evidence="1">Purine metabolism; GMP biosynthesis; GMP from XMP (L-Gln route): step 1/1.</text>
</comment>
<comment type="subunit">
    <text evidence="1">Homodimer.</text>
</comment>
<sequence>MTQHDRLLIIDFGSQVTQLIARRLRELNVYCEIHPYQNVTEAFLKGFAPKAVIFSGGPSSVFAEGAPMPPAGVFDLGVPILGICYGQQVMMHCLGGKVERGHGTAEFGRAFVTPTAERLAILDGWFEEGREQVWMSHGDHVSQIAPGFQVFGTSPNAPFAITGDPARHFYAVQFHPEVHHTPKGAKLYENFVRLAGFKGDWTMGAYREEAIARIRAQVGDQKVICGLSGGVDSSVAAVLIHEAIGDQLTCVFVDHGLLRLGEAEQVVKMFRDHYNMPLIHADESDLFLGALEGVSDPEVKRKTIGRLFIDVFQKHAADVGGATFLAQGTLYPDVIESVSFSGGPSVTIKSHHNVGGLPEKMGLKLVEPLRELFKDEVRALGRELGLPESFIGRHPFPGPGLAIRCPGEITREKLEILRRADAVYIDQIRRHGLYDEIWQAFVALLPVRTVGVMGDGRTYDYACALRAVTSVDGMTADYYPFTHDFLGETATRIINEVQGINRVTYDITSKPPGTIEWE</sequence>
<keyword id="KW-0067">ATP-binding</keyword>
<keyword id="KW-0315">Glutamine amidotransferase</keyword>
<keyword id="KW-0332">GMP biosynthesis</keyword>
<keyword id="KW-0436">Ligase</keyword>
<keyword id="KW-0547">Nucleotide-binding</keyword>
<keyword id="KW-0658">Purine biosynthesis</keyword>
<proteinExistence type="inferred from homology"/>
<evidence type="ECO:0000255" key="1">
    <source>
        <dbReference type="HAMAP-Rule" id="MF_00344"/>
    </source>
</evidence>